<comment type="function">
    <text evidence="1">Catalyzes the anti-1,4-elimination of the C-3 phosphate and the C-6 proR hydrogen from 5-enolpyruvylshikimate-3-phosphate (EPSP) to yield chorismate, which is the branch point compound that serves as the starting substrate for the three terminal pathways of aromatic amino acid biosynthesis. This reaction introduces a second double bond into the aromatic ring system.</text>
</comment>
<comment type="catalytic activity">
    <reaction evidence="1">
        <text>5-O-(1-carboxyvinyl)-3-phosphoshikimate = chorismate + phosphate</text>
        <dbReference type="Rhea" id="RHEA:21020"/>
        <dbReference type="ChEBI" id="CHEBI:29748"/>
        <dbReference type="ChEBI" id="CHEBI:43474"/>
        <dbReference type="ChEBI" id="CHEBI:57701"/>
        <dbReference type="EC" id="4.2.3.5"/>
    </reaction>
</comment>
<comment type="cofactor">
    <cofactor evidence="1">
        <name>FMNH2</name>
        <dbReference type="ChEBI" id="CHEBI:57618"/>
    </cofactor>
    <text evidence="1">Reduced FMN (FMNH(2)).</text>
</comment>
<comment type="pathway">
    <text evidence="1">Metabolic intermediate biosynthesis; chorismate biosynthesis; chorismate from D-erythrose 4-phosphate and phosphoenolpyruvate: step 7/7.</text>
</comment>
<comment type="subunit">
    <text evidence="1">Homotetramer.</text>
</comment>
<comment type="similarity">
    <text evidence="1">Belongs to the chorismate synthase family.</text>
</comment>
<protein>
    <recommendedName>
        <fullName evidence="1">Chorismate synthase</fullName>
        <shortName evidence="1">CS</shortName>
        <ecNumber evidence="1">4.2.3.5</ecNumber>
    </recommendedName>
    <alternativeName>
        <fullName evidence="1">5-enolpyruvylshikimate-3-phosphate phospholyase</fullName>
    </alternativeName>
</protein>
<feature type="chain" id="PRO_0000256342" description="Chorismate synthase">
    <location>
        <begin position="1"/>
        <end position="388"/>
    </location>
</feature>
<feature type="binding site" evidence="1">
    <location>
        <position position="39"/>
    </location>
    <ligand>
        <name>NADP(+)</name>
        <dbReference type="ChEBI" id="CHEBI:58349"/>
    </ligand>
</feature>
<feature type="binding site" evidence="1">
    <location>
        <position position="45"/>
    </location>
    <ligand>
        <name>NADP(+)</name>
        <dbReference type="ChEBI" id="CHEBI:58349"/>
    </ligand>
</feature>
<feature type="binding site" evidence="1">
    <location>
        <begin position="132"/>
        <end position="134"/>
    </location>
    <ligand>
        <name>FMN</name>
        <dbReference type="ChEBI" id="CHEBI:58210"/>
    </ligand>
</feature>
<feature type="binding site" evidence="1">
    <location>
        <begin position="251"/>
        <end position="252"/>
    </location>
    <ligand>
        <name>FMN</name>
        <dbReference type="ChEBI" id="CHEBI:58210"/>
    </ligand>
</feature>
<feature type="binding site" evidence="1">
    <location>
        <position position="296"/>
    </location>
    <ligand>
        <name>FMN</name>
        <dbReference type="ChEBI" id="CHEBI:58210"/>
    </ligand>
</feature>
<feature type="binding site" evidence="1">
    <location>
        <begin position="311"/>
        <end position="315"/>
    </location>
    <ligand>
        <name>FMN</name>
        <dbReference type="ChEBI" id="CHEBI:58210"/>
    </ligand>
</feature>
<feature type="binding site" evidence="1">
    <location>
        <position position="337"/>
    </location>
    <ligand>
        <name>FMN</name>
        <dbReference type="ChEBI" id="CHEBI:58210"/>
    </ligand>
</feature>
<gene>
    <name evidence="1" type="primary">aroC</name>
    <name type="ordered locus">SH1446</name>
</gene>
<organism>
    <name type="scientific">Staphylococcus haemolyticus (strain JCSC1435)</name>
    <dbReference type="NCBI Taxonomy" id="279808"/>
    <lineage>
        <taxon>Bacteria</taxon>
        <taxon>Bacillati</taxon>
        <taxon>Bacillota</taxon>
        <taxon>Bacilli</taxon>
        <taxon>Bacillales</taxon>
        <taxon>Staphylococcaceae</taxon>
        <taxon>Staphylococcus</taxon>
    </lineage>
</organism>
<sequence length="388" mass="43077">MKYLTSGESHGPQLTVIIEGVPANLEIKAEDINKEMFKRQGGYGRGRRMQIEKDAVEIVSGVRNGYTLGSPITIVVTNDDFTHWRNIMGIEPISDEERDNMKRTITKPRPGHADLIGGMKYNHRDLRNVLERSSARETAARVAVGAVSKILLEQLDIHMYSRVVEIGGIKDEGLYDTETFKQNIDKNDVRVIDETIAQKMRDKIDAAKKDGDSIGGVVQVMVENMPVAVGSYVQYDRKLDGRIAQGVVSINAFKGVSFGEGFKAAEKPGSEIQDEILYDNEIGFYRGSNHLGGFEGGMTNGMPIIVNGVMKPIPTLYKPLNSVDINTKEDFKATIERSDSCAVPAASVVCEHVVAFEVAKAITEEFQSNHIDQLKAQIDERRRLNIEF</sequence>
<dbReference type="EC" id="4.2.3.5" evidence="1"/>
<dbReference type="EMBL" id="AP006716">
    <property type="protein sequence ID" value="BAE04755.1"/>
    <property type="molecule type" value="Genomic_DNA"/>
</dbReference>
<dbReference type="RefSeq" id="WP_011275741.1">
    <property type="nucleotide sequence ID" value="NC_007168.1"/>
</dbReference>
<dbReference type="SMR" id="Q4L6H0"/>
<dbReference type="KEGG" id="sha:SH1446"/>
<dbReference type="eggNOG" id="COG0082">
    <property type="taxonomic scope" value="Bacteria"/>
</dbReference>
<dbReference type="HOGENOM" id="CLU_034547_2_0_9"/>
<dbReference type="OrthoDB" id="9771806at2"/>
<dbReference type="UniPathway" id="UPA00053">
    <property type="reaction ID" value="UER00090"/>
</dbReference>
<dbReference type="Proteomes" id="UP000000543">
    <property type="component" value="Chromosome"/>
</dbReference>
<dbReference type="GO" id="GO:0005829">
    <property type="term" value="C:cytosol"/>
    <property type="evidence" value="ECO:0007669"/>
    <property type="project" value="TreeGrafter"/>
</dbReference>
<dbReference type="GO" id="GO:0004107">
    <property type="term" value="F:chorismate synthase activity"/>
    <property type="evidence" value="ECO:0007669"/>
    <property type="project" value="UniProtKB-UniRule"/>
</dbReference>
<dbReference type="GO" id="GO:0010181">
    <property type="term" value="F:FMN binding"/>
    <property type="evidence" value="ECO:0007669"/>
    <property type="project" value="TreeGrafter"/>
</dbReference>
<dbReference type="GO" id="GO:0008652">
    <property type="term" value="P:amino acid biosynthetic process"/>
    <property type="evidence" value="ECO:0007669"/>
    <property type="project" value="UniProtKB-KW"/>
</dbReference>
<dbReference type="GO" id="GO:0009073">
    <property type="term" value="P:aromatic amino acid family biosynthetic process"/>
    <property type="evidence" value="ECO:0007669"/>
    <property type="project" value="UniProtKB-KW"/>
</dbReference>
<dbReference type="GO" id="GO:0009423">
    <property type="term" value="P:chorismate biosynthetic process"/>
    <property type="evidence" value="ECO:0007669"/>
    <property type="project" value="UniProtKB-UniRule"/>
</dbReference>
<dbReference type="CDD" id="cd07304">
    <property type="entry name" value="Chorismate_synthase"/>
    <property type="match status" value="1"/>
</dbReference>
<dbReference type="FunFam" id="3.60.150.10:FF:000002">
    <property type="entry name" value="Chorismate synthase"/>
    <property type="match status" value="1"/>
</dbReference>
<dbReference type="Gene3D" id="3.60.150.10">
    <property type="entry name" value="Chorismate synthase AroC"/>
    <property type="match status" value="1"/>
</dbReference>
<dbReference type="HAMAP" id="MF_00300">
    <property type="entry name" value="Chorismate_synth"/>
    <property type="match status" value="1"/>
</dbReference>
<dbReference type="InterPro" id="IPR000453">
    <property type="entry name" value="Chorismate_synth"/>
</dbReference>
<dbReference type="InterPro" id="IPR035904">
    <property type="entry name" value="Chorismate_synth_AroC_sf"/>
</dbReference>
<dbReference type="InterPro" id="IPR020541">
    <property type="entry name" value="Chorismate_synthase_CS"/>
</dbReference>
<dbReference type="NCBIfam" id="TIGR00033">
    <property type="entry name" value="aroC"/>
    <property type="match status" value="1"/>
</dbReference>
<dbReference type="NCBIfam" id="NF003793">
    <property type="entry name" value="PRK05382.1"/>
    <property type="match status" value="1"/>
</dbReference>
<dbReference type="PANTHER" id="PTHR21085">
    <property type="entry name" value="CHORISMATE SYNTHASE"/>
    <property type="match status" value="1"/>
</dbReference>
<dbReference type="PANTHER" id="PTHR21085:SF0">
    <property type="entry name" value="CHORISMATE SYNTHASE"/>
    <property type="match status" value="1"/>
</dbReference>
<dbReference type="Pfam" id="PF01264">
    <property type="entry name" value="Chorismate_synt"/>
    <property type="match status" value="1"/>
</dbReference>
<dbReference type="PIRSF" id="PIRSF001456">
    <property type="entry name" value="Chorismate_synth"/>
    <property type="match status" value="1"/>
</dbReference>
<dbReference type="SUPFAM" id="SSF103263">
    <property type="entry name" value="Chorismate synthase, AroC"/>
    <property type="match status" value="1"/>
</dbReference>
<dbReference type="PROSITE" id="PS00787">
    <property type="entry name" value="CHORISMATE_SYNTHASE_1"/>
    <property type="match status" value="1"/>
</dbReference>
<dbReference type="PROSITE" id="PS00788">
    <property type="entry name" value="CHORISMATE_SYNTHASE_2"/>
    <property type="match status" value="1"/>
</dbReference>
<dbReference type="PROSITE" id="PS00789">
    <property type="entry name" value="CHORISMATE_SYNTHASE_3"/>
    <property type="match status" value="1"/>
</dbReference>
<evidence type="ECO:0000255" key="1">
    <source>
        <dbReference type="HAMAP-Rule" id="MF_00300"/>
    </source>
</evidence>
<reference key="1">
    <citation type="journal article" date="2005" name="J. Bacteriol.">
        <title>Whole-genome sequencing of Staphylococcus haemolyticus uncovers the extreme plasticity of its genome and the evolution of human-colonizing staphylococcal species.</title>
        <authorList>
            <person name="Takeuchi F."/>
            <person name="Watanabe S."/>
            <person name="Baba T."/>
            <person name="Yuzawa H."/>
            <person name="Ito T."/>
            <person name="Morimoto Y."/>
            <person name="Kuroda M."/>
            <person name="Cui L."/>
            <person name="Takahashi M."/>
            <person name="Ankai A."/>
            <person name="Baba S."/>
            <person name="Fukui S."/>
            <person name="Lee J.C."/>
            <person name="Hiramatsu K."/>
        </authorList>
    </citation>
    <scope>NUCLEOTIDE SEQUENCE [LARGE SCALE GENOMIC DNA]</scope>
    <source>
        <strain>JCSC1435</strain>
    </source>
</reference>
<accession>Q4L6H0</accession>
<proteinExistence type="inferred from homology"/>
<name>AROC_STAHJ</name>
<keyword id="KW-0028">Amino-acid biosynthesis</keyword>
<keyword id="KW-0057">Aromatic amino acid biosynthesis</keyword>
<keyword id="KW-0274">FAD</keyword>
<keyword id="KW-0285">Flavoprotein</keyword>
<keyword id="KW-0288">FMN</keyword>
<keyword id="KW-0456">Lyase</keyword>
<keyword id="KW-0521">NADP</keyword>